<keyword id="KW-0067">ATP-binding</keyword>
<keyword id="KW-0460">Magnesium</keyword>
<keyword id="KW-0479">Metal-binding</keyword>
<keyword id="KW-0547">Nucleotide-binding</keyword>
<keyword id="KW-0548">Nucleotidyltransferase</keyword>
<keyword id="KW-1185">Reference proteome</keyword>
<keyword id="KW-0692">RNA repair</keyword>
<keyword id="KW-0694">RNA-binding</keyword>
<keyword id="KW-0808">Transferase</keyword>
<keyword id="KW-0819">tRNA processing</keyword>
<evidence type="ECO:0000255" key="1">
    <source>
        <dbReference type="HAMAP-Rule" id="MF_01263"/>
    </source>
</evidence>
<evidence type="ECO:0000305" key="2"/>
<name>CCA_LACLA</name>
<reference key="1">
    <citation type="journal article" date="2001" name="Genome Res.">
        <title>The complete genome sequence of the lactic acid bacterium Lactococcus lactis ssp. lactis IL1403.</title>
        <authorList>
            <person name="Bolotin A."/>
            <person name="Wincker P."/>
            <person name="Mauger S."/>
            <person name="Jaillon O."/>
            <person name="Malarme K."/>
            <person name="Weissenbach J."/>
            <person name="Ehrlich S.D."/>
            <person name="Sorokin A."/>
        </authorList>
    </citation>
    <scope>NUCLEOTIDE SEQUENCE [LARGE SCALE GENOMIC DNA]</scope>
    <source>
        <strain>IL1403</strain>
    </source>
</reference>
<dbReference type="EC" id="2.7.7.72" evidence="1"/>
<dbReference type="EMBL" id="AE005176">
    <property type="protein sequence ID" value="AAK05657.1"/>
    <property type="status" value="ALT_INIT"/>
    <property type="molecule type" value="Genomic_DNA"/>
</dbReference>
<dbReference type="PIR" id="G86819">
    <property type="entry name" value="G86819"/>
</dbReference>
<dbReference type="RefSeq" id="NP_267715.2">
    <property type="nucleotide sequence ID" value="NC_002662.1"/>
</dbReference>
<dbReference type="RefSeq" id="WP_003130698.1">
    <property type="nucleotide sequence ID" value="NC_002662.1"/>
</dbReference>
<dbReference type="SMR" id="Q9CFC2"/>
<dbReference type="PaxDb" id="272623-L0324"/>
<dbReference type="EnsemblBacteria" id="AAK05657">
    <property type="protein sequence ID" value="AAK05657"/>
    <property type="gene ID" value="L0324"/>
</dbReference>
<dbReference type="KEGG" id="lla:L0324"/>
<dbReference type="PATRIC" id="fig|272623.7.peg.1677"/>
<dbReference type="eggNOG" id="COG0617">
    <property type="taxonomic scope" value="Bacteria"/>
</dbReference>
<dbReference type="HOGENOM" id="CLU_015961_3_1_9"/>
<dbReference type="OrthoDB" id="9805698at2"/>
<dbReference type="Proteomes" id="UP000002196">
    <property type="component" value="Chromosome"/>
</dbReference>
<dbReference type="GO" id="GO:0005524">
    <property type="term" value="F:ATP binding"/>
    <property type="evidence" value="ECO:0007669"/>
    <property type="project" value="UniProtKB-UniRule"/>
</dbReference>
<dbReference type="GO" id="GO:0004810">
    <property type="term" value="F:CCA tRNA nucleotidyltransferase activity"/>
    <property type="evidence" value="ECO:0007669"/>
    <property type="project" value="UniProtKB-UniRule"/>
</dbReference>
<dbReference type="GO" id="GO:0000287">
    <property type="term" value="F:magnesium ion binding"/>
    <property type="evidence" value="ECO:0007669"/>
    <property type="project" value="UniProtKB-UniRule"/>
</dbReference>
<dbReference type="GO" id="GO:0000049">
    <property type="term" value="F:tRNA binding"/>
    <property type="evidence" value="ECO:0007669"/>
    <property type="project" value="UniProtKB-UniRule"/>
</dbReference>
<dbReference type="GO" id="GO:0042245">
    <property type="term" value="P:RNA repair"/>
    <property type="evidence" value="ECO:0007669"/>
    <property type="project" value="UniProtKB-KW"/>
</dbReference>
<dbReference type="GO" id="GO:0001680">
    <property type="term" value="P:tRNA 3'-terminal CCA addition"/>
    <property type="evidence" value="ECO:0007669"/>
    <property type="project" value="UniProtKB-UniRule"/>
</dbReference>
<dbReference type="CDD" id="cd05398">
    <property type="entry name" value="NT_ClassII-CCAase"/>
    <property type="match status" value="1"/>
</dbReference>
<dbReference type="Gene3D" id="1.10.110.30">
    <property type="match status" value="1"/>
</dbReference>
<dbReference type="Gene3D" id="1.10.246.80">
    <property type="match status" value="1"/>
</dbReference>
<dbReference type="Gene3D" id="1.20.58.560">
    <property type="match status" value="1"/>
</dbReference>
<dbReference type="Gene3D" id="3.30.460.10">
    <property type="entry name" value="Beta Polymerase, domain 2"/>
    <property type="match status" value="1"/>
</dbReference>
<dbReference type="HAMAP" id="MF_01263">
    <property type="entry name" value="CCA_bact_type3"/>
    <property type="match status" value="1"/>
</dbReference>
<dbReference type="InterPro" id="IPR050264">
    <property type="entry name" value="Bact_CCA-adding_enz_type3_sf"/>
</dbReference>
<dbReference type="InterPro" id="IPR032810">
    <property type="entry name" value="CCA-adding_enz_C"/>
</dbReference>
<dbReference type="InterPro" id="IPR023068">
    <property type="entry name" value="CCA-adding_enz_firmicutes"/>
</dbReference>
<dbReference type="InterPro" id="IPR043519">
    <property type="entry name" value="NT_sf"/>
</dbReference>
<dbReference type="InterPro" id="IPR002646">
    <property type="entry name" value="PolA_pol_head_dom"/>
</dbReference>
<dbReference type="InterPro" id="IPR032828">
    <property type="entry name" value="PolyA_RNA-bd"/>
</dbReference>
<dbReference type="NCBIfam" id="NF009814">
    <property type="entry name" value="PRK13299.1"/>
    <property type="match status" value="1"/>
</dbReference>
<dbReference type="PANTHER" id="PTHR46173">
    <property type="entry name" value="CCA TRNA NUCLEOTIDYLTRANSFERASE 1, MITOCHONDRIAL"/>
    <property type="match status" value="1"/>
</dbReference>
<dbReference type="PANTHER" id="PTHR46173:SF1">
    <property type="entry name" value="CCA TRNA NUCLEOTIDYLTRANSFERASE 1, MITOCHONDRIAL"/>
    <property type="match status" value="1"/>
</dbReference>
<dbReference type="Pfam" id="PF01743">
    <property type="entry name" value="PolyA_pol"/>
    <property type="match status" value="1"/>
</dbReference>
<dbReference type="Pfam" id="PF12627">
    <property type="entry name" value="PolyA_pol_RNAbd"/>
    <property type="match status" value="1"/>
</dbReference>
<dbReference type="Pfam" id="PF13735">
    <property type="entry name" value="tRNA_NucTran2_2"/>
    <property type="match status" value="1"/>
</dbReference>
<dbReference type="SUPFAM" id="SSF81301">
    <property type="entry name" value="Nucleotidyltransferase"/>
    <property type="match status" value="1"/>
</dbReference>
<dbReference type="SUPFAM" id="SSF81891">
    <property type="entry name" value="Poly A polymerase C-terminal region-like"/>
    <property type="match status" value="1"/>
</dbReference>
<sequence length="398" mass="45781">MKLEKLPEEFVQAKPVLEKIIEHGFEAYFVGGSVRDILLGREIHDVDIATSAYPEEIKDIFPYTIDVGIEHGTVLVLAGKSEAEHYEITTFRTESKYTDYRRPDHVDFVRDLREDLKRRDFTINAFACDVNGQIIDLFDGLTDLKERRLTAVGSALERFNEDALRIMRAMRFAATLDFQIENKTFLAMCESAHLLEKISVERIFIEFDKLLLGQDWRNGLTLLLKSGAYKYLPDLQDSALKKVLTDLSVDFHFQNSEQAWAALLTRFSNVDVKTFLRKWKVSNEFAKFVADLVSAYELDSWDLMSLYHFGLEKVLLVDELKVAYGLKINREQAVTINNQLQIHDKSEIVIAGKDLMEEFSLEPGPELGKILKIIEEKIVKNELKNEQAAIFAEVKKML</sequence>
<accession>Q9CFC2</accession>
<organism>
    <name type="scientific">Lactococcus lactis subsp. lactis (strain IL1403)</name>
    <name type="common">Streptococcus lactis</name>
    <dbReference type="NCBI Taxonomy" id="272623"/>
    <lineage>
        <taxon>Bacteria</taxon>
        <taxon>Bacillati</taxon>
        <taxon>Bacillota</taxon>
        <taxon>Bacilli</taxon>
        <taxon>Lactobacillales</taxon>
        <taxon>Streptococcaceae</taxon>
        <taxon>Lactococcus</taxon>
    </lineage>
</organism>
<proteinExistence type="inferred from homology"/>
<gene>
    <name evidence="1" type="primary">cca</name>
    <name type="ordered locus">LL1559</name>
    <name type="ORF">L0324</name>
</gene>
<comment type="function">
    <text evidence="1">Catalyzes the addition and repair of the essential 3'-terminal CCA sequence in tRNAs without using a nucleic acid template. Adds these three nucleotides in the order of C, C, and A to the tRNA nucleotide-73, using CTP and ATP as substrates and producing inorganic pyrophosphate. tRNA 3'-terminal CCA addition is required both for tRNA processing and repair. Also involved in tRNA surveillance by mediating tandem CCA addition to generate a CCACCA at the 3' terminus of unstable tRNAs. While stable tRNAs receive only 3'-terminal CCA, unstable tRNAs are marked with CCACCA and rapidly degraded.</text>
</comment>
<comment type="catalytic activity">
    <reaction evidence="1">
        <text>a tRNA precursor + 2 CTP + ATP = a tRNA with a 3' CCA end + 3 diphosphate</text>
        <dbReference type="Rhea" id="RHEA:14433"/>
        <dbReference type="Rhea" id="RHEA-COMP:10465"/>
        <dbReference type="Rhea" id="RHEA-COMP:10468"/>
        <dbReference type="ChEBI" id="CHEBI:30616"/>
        <dbReference type="ChEBI" id="CHEBI:33019"/>
        <dbReference type="ChEBI" id="CHEBI:37563"/>
        <dbReference type="ChEBI" id="CHEBI:74896"/>
        <dbReference type="ChEBI" id="CHEBI:83071"/>
        <dbReference type="EC" id="2.7.7.72"/>
    </reaction>
</comment>
<comment type="catalytic activity">
    <reaction evidence="1">
        <text>a tRNA with a 3' CCA end + 2 CTP + ATP = a tRNA with a 3' CCACCA end + 3 diphosphate</text>
        <dbReference type="Rhea" id="RHEA:76235"/>
        <dbReference type="Rhea" id="RHEA-COMP:10468"/>
        <dbReference type="Rhea" id="RHEA-COMP:18655"/>
        <dbReference type="ChEBI" id="CHEBI:30616"/>
        <dbReference type="ChEBI" id="CHEBI:33019"/>
        <dbReference type="ChEBI" id="CHEBI:37563"/>
        <dbReference type="ChEBI" id="CHEBI:83071"/>
        <dbReference type="ChEBI" id="CHEBI:195187"/>
    </reaction>
    <physiologicalReaction direction="left-to-right" evidence="1">
        <dbReference type="Rhea" id="RHEA:76236"/>
    </physiologicalReaction>
</comment>
<comment type="cofactor">
    <cofactor evidence="1">
        <name>Mg(2+)</name>
        <dbReference type="ChEBI" id="CHEBI:18420"/>
    </cofactor>
</comment>
<comment type="subunit">
    <text evidence="1">Homodimer.</text>
</comment>
<comment type="miscellaneous">
    <text evidence="1">A single active site specifically recognizes both ATP and CTP and is responsible for their addition.</text>
</comment>
<comment type="similarity">
    <text evidence="1">Belongs to the tRNA nucleotidyltransferase/poly(A) polymerase family. Bacterial CCA-adding enzyme type 3 subfamily.</text>
</comment>
<comment type="sequence caution" evidence="2">
    <conflict type="erroneous initiation">
        <sequence resource="EMBL-CDS" id="AAK05657"/>
    </conflict>
</comment>
<protein>
    <recommendedName>
        <fullName evidence="1">CCA-adding enzyme</fullName>
        <ecNumber evidence="1">2.7.7.72</ecNumber>
    </recommendedName>
    <alternativeName>
        <fullName evidence="1">CCA tRNA nucleotidyltransferase</fullName>
    </alternativeName>
    <alternativeName>
        <fullName evidence="1">tRNA CCA-pyrophosphorylase</fullName>
    </alternativeName>
    <alternativeName>
        <fullName evidence="1">tRNA adenylyl-/cytidylyl- transferase</fullName>
    </alternativeName>
    <alternativeName>
        <fullName evidence="1">tRNA nucleotidyltransferase</fullName>
    </alternativeName>
    <alternativeName>
        <fullName evidence="1">tRNA-NT</fullName>
    </alternativeName>
</protein>
<feature type="chain" id="PRO_0000139039" description="CCA-adding enzyme">
    <location>
        <begin position="1"/>
        <end position="398"/>
    </location>
</feature>
<feature type="binding site" evidence="1">
    <location>
        <position position="32"/>
    </location>
    <ligand>
        <name>ATP</name>
        <dbReference type="ChEBI" id="CHEBI:30616"/>
    </ligand>
</feature>
<feature type="binding site" evidence="1">
    <location>
        <position position="32"/>
    </location>
    <ligand>
        <name>CTP</name>
        <dbReference type="ChEBI" id="CHEBI:37563"/>
    </ligand>
</feature>
<feature type="binding site" evidence="1">
    <location>
        <position position="35"/>
    </location>
    <ligand>
        <name>ATP</name>
        <dbReference type="ChEBI" id="CHEBI:30616"/>
    </ligand>
</feature>
<feature type="binding site" evidence="1">
    <location>
        <position position="35"/>
    </location>
    <ligand>
        <name>CTP</name>
        <dbReference type="ChEBI" id="CHEBI:37563"/>
    </ligand>
</feature>
<feature type="binding site" evidence="1">
    <location>
        <position position="45"/>
    </location>
    <ligand>
        <name>Mg(2+)</name>
        <dbReference type="ChEBI" id="CHEBI:18420"/>
    </ligand>
</feature>
<feature type="binding site" evidence="1">
    <location>
        <position position="47"/>
    </location>
    <ligand>
        <name>Mg(2+)</name>
        <dbReference type="ChEBI" id="CHEBI:18420"/>
    </ligand>
</feature>
<feature type="binding site" evidence="1">
    <location>
        <position position="119"/>
    </location>
    <ligand>
        <name>ATP</name>
        <dbReference type="ChEBI" id="CHEBI:30616"/>
    </ligand>
</feature>
<feature type="binding site" evidence="1">
    <location>
        <position position="119"/>
    </location>
    <ligand>
        <name>CTP</name>
        <dbReference type="ChEBI" id="CHEBI:37563"/>
    </ligand>
</feature>
<feature type="binding site" evidence="1">
    <location>
        <position position="162"/>
    </location>
    <ligand>
        <name>ATP</name>
        <dbReference type="ChEBI" id="CHEBI:30616"/>
    </ligand>
</feature>
<feature type="binding site" evidence="1">
    <location>
        <position position="162"/>
    </location>
    <ligand>
        <name>CTP</name>
        <dbReference type="ChEBI" id="CHEBI:37563"/>
    </ligand>
</feature>
<feature type="binding site" evidence="1">
    <location>
        <position position="165"/>
    </location>
    <ligand>
        <name>ATP</name>
        <dbReference type="ChEBI" id="CHEBI:30616"/>
    </ligand>
</feature>
<feature type="binding site" evidence="1">
    <location>
        <position position="165"/>
    </location>
    <ligand>
        <name>CTP</name>
        <dbReference type="ChEBI" id="CHEBI:37563"/>
    </ligand>
</feature>
<feature type="binding site" evidence="1">
    <location>
        <position position="168"/>
    </location>
    <ligand>
        <name>ATP</name>
        <dbReference type="ChEBI" id="CHEBI:30616"/>
    </ligand>
</feature>
<feature type="binding site" evidence="1">
    <location>
        <position position="168"/>
    </location>
    <ligand>
        <name>CTP</name>
        <dbReference type="ChEBI" id="CHEBI:37563"/>
    </ligand>
</feature>
<feature type="binding site" evidence="1">
    <location>
        <position position="171"/>
    </location>
    <ligand>
        <name>ATP</name>
        <dbReference type="ChEBI" id="CHEBI:30616"/>
    </ligand>
</feature>
<feature type="binding site" evidence="1">
    <location>
        <position position="171"/>
    </location>
    <ligand>
        <name>CTP</name>
        <dbReference type="ChEBI" id="CHEBI:37563"/>
    </ligand>
</feature>